<keyword id="KW-0133">Cell shape</keyword>
<keyword id="KW-0961">Cell wall biogenesis/degradation</keyword>
<keyword id="KW-0413">Isomerase</keyword>
<keyword id="KW-0573">Peptidoglycan synthesis</keyword>
<reference key="1">
    <citation type="journal article" date="2003" name="Lancet">
        <title>Genome sequence of Vibrio parahaemolyticus: a pathogenic mechanism distinct from that of V. cholerae.</title>
        <authorList>
            <person name="Makino K."/>
            <person name="Oshima K."/>
            <person name="Kurokawa K."/>
            <person name="Yokoyama K."/>
            <person name="Uda T."/>
            <person name="Tagomori K."/>
            <person name="Iijima Y."/>
            <person name="Najima M."/>
            <person name="Nakano M."/>
            <person name="Yamashita A."/>
            <person name="Kubota Y."/>
            <person name="Kimura S."/>
            <person name="Yasunaga T."/>
            <person name="Honda T."/>
            <person name="Shinagawa H."/>
            <person name="Hattori M."/>
            <person name="Iida T."/>
        </authorList>
    </citation>
    <scope>NUCLEOTIDE SEQUENCE [LARGE SCALE GENOMIC DNA]</scope>
    <source>
        <strain>RIMD 2210633</strain>
    </source>
</reference>
<comment type="function">
    <text evidence="1">Provides the (R)-glutamate required for cell wall biosynthesis.</text>
</comment>
<comment type="catalytic activity">
    <reaction evidence="1">
        <text>L-glutamate = D-glutamate</text>
        <dbReference type="Rhea" id="RHEA:12813"/>
        <dbReference type="ChEBI" id="CHEBI:29985"/>
        <dbReference type="ChEBI" id="CHEBI:29986"/>
        <dbReference type="EC" id="5.1.1.3"/>
    </reaction>
</comment>
<comment type="pathway">
    <text evidence="1">Cell wall biogenesis; peptidoglycan biosynthesis.</text>
</comment>
<comment type="similarity">
    <text evidence="1">Belongs to the aspartate/glutamate racemases family.</text>
</comment>
<proteinExistence type="inferred from homology"/>
<organism>
    <name type="scientific">Vibrio parahaemolyticus serotype O3:K6 (strain RIMD 2210633)</name>
    <dbReference type="NCBI Taxonomy" id="223926"/>
    <lineage>
        <taxon>Bacteria</taxon>
        <taxon>Pseudomonadati</taxon>
        <taxon>Pseudomonadota</taxon>
        <taxon>Gammaproteobacteria</taxon>
        <taxon>Vibrionales</taxon>
        <taxon>Vibrionaceae</taxon>
        <taxon>Vibrio</taxon>
    </lineage>
</organism>
<feature type="chain" id="PRO_0000095531" description="Glutamate racemase">
    <location>
        <begin position="1"/>
        <end position="270"/>
    </location>
</feature>
<feature type="active site" description="Proton donor/acceptor" evidence="1">
    <location>
        <position position="77"/>
    </location>
</feature>
<feature type="active site" description="Proton donor/acceptor" evidence="1">
    <location>
        <position position="185"/>
    </location>
</feature>
<feature type="binding site" evidence="1">
    <location>
        <begin position="13"/>
        <end position="14"/>
    </location>
    <ligand>
        <name>substrate</name>
    </ligand>
</feature>
<feature type="binding site" evidence="1">
    <location>
        <begin position="45"/>
        <end position="46"/>
    </location>
    <ligand>
        <name>substrate</name>
    </ligand>
</feature>
<feature type="binding site" evidence="1">
    <location>
        <begin position="78"/>
        <end position="79"/>
    </location>
    <ligand>
        <name>substrate</name>
    </ligand>
</feature>
<feature type="binding site" evidence="1">
    <location>
        <begin position="186"/>
        <end position="187"/>
    </location>
    <ligand>
        <name>substrate</name>
    </ligand>
</feature>
<protein>
    <recommendedName>
        <fullName evidence="1">Glutamate racemase</fullName>
        <ecNumber evidence="1">5.1.1.3</ecNumber>
    </recommendedName>
</protein>
<evidence type="ECO:0000255" key="1">
    <source>
        <dbReference type="HAMAP-Rule" id="MF_00258"/>
    </source>
</evidence>
<name>MURI_VIBPA</name>
<sequence>MRASSKKKVLVFDSGVGGLSVFQEIHQLLPHLDYFYLFDNEAYPYGELDQNVLISRVNQLVSALVAEHHIDIVVIACNTASTIVLPSLRDNLSVPVVGVVPAIKPASLLATQGVGLIATPATVTRQYTHELIRDFAQGKPVELLGSTRLVDMAEEKLRGESVPLDELKSILSPLCNKVDVAVLGCTHFPLIKNEIQQVLGSNVVLIDSGEAIARRVKALLSCGELEEKEEGIKRIFASAPPWQEDALNICLAKLGFNPVQIYRHLGVSDR</sequence>
<gene>
    <name evidence="1" type="primary">murI</name>
    <name type="ordered locus">VP2936</name>
</gene>
<dbReference type="EC" id="5.1.1.3" evidence="1"/>
<dbReference type="EMBL" id="BA000031">
    <property type="protein sequence ID" value="BAC61199.1"/>
    <property type="molecule type" value="Genomic_DNA"/>
</dbReference>
<dbReference type="RefSeq" id="NP_799315.1">
    <property type="nucleotide sequence ID" value="NC_004603.1"/>
</dbReference>
<dbReference type="RefSeq" id="WP_005480859.1">
    <property type="nucleotide sequence ID" value="NC_004603.1"/>
</dbReference>
<dbReference type="SMR" id="Q87KP1"/>
<dbReference type="GeneID" id="1190522"/>
<dbReference type="KEGG" id="vpa:VP2936"/>
<dbReference type="PATRIC" id="fig|223926.6.peg.2826"/>
<dbReference type="eggNOG" id="COG0796">
    <property type="taxonomic scope" value="Bacteria"/>
</dbReference>
<dbReference type="HOGENOM" id="CLU_052344_2_0_6"/>
<dbReference type="UniPathway" id="UPA00219"/>
<dbReference type="Proteomes" id="UP000002493">
    <property type="component" value="Chromosome 1"/>
</dbReference>
<dbReference type="GO" id="GO:0008881">
    <property type="term" value="F:glutamate racemase activity"/>
    <property type="evidence" value="ECO:0007669"/>
    <property type="project" value="UniProtKB-UniRule"/>
</dbReference>
<dbReference type="GO" id="GO:0071555">
    <property type="term" value="P:cell wall organization"/>
    <property type="evidence" value="ECO:0007669"/>
    <property type="project" value="UniProtKB-KW"/>
</dbReference>
<dbReference type="GO" id="GO:0009252">
    <property type="term" value="P:peptidoglycan biosynthetic process"/>
    <property type="evidence" value="ECO:0007669"/>
    <property type="project" value="UniProtKB-UniRule"/>
</dbReference>
<dbReference type="GO" id="GO:0008360">
    <property type="term" value="P:regulation of cell shape"/>
    <property type="evidence" value="ECO:0007669"/>
    <property type="project" value="UniProtKB-KW"/>
</dbReference>
<dbReference type="FunFam" id="3.40.50.1860:FF:000001">
    <property type="entry name" value="Glutamate racemase"/>
    <property type="match status" value="1"/>
</dbReference>
<dbReference type="Gene3D" id="3.40.50.1860">
    <property type="match status" value="2"/>
</dbReference>
<dbReference type="HAMAP" id="MF_00258">
    <property type="entry name" value="Glu_racemase"/>
    <property type="match status" value="1"/>
</dbReference>
<dbReference type="InterPro" id="IPR015942">
    <property type="entry name" value="Asp/Glu/hydantoin_racemase"/>
</dbReference>
<dbReference type="InterPro" id="IPR001920">
    <property type="entry name" value="Asp/Glu_race"/>
</dbReference>
<dbReference type="InterPro" id="IPR018187">
    <property type="entry name" value="Asp/Glu_racemase_AS_1"/>
</dbReference>
<dbReference type="InterPro" id="IPR004391">
    <property type="entry name" value="Glu_race"/>
</dbReference>
<dbReference type="NCBIfam" id="TIGR00067">
    <property type="entry name" value="glut_race"/>
    <property type="match status" value="1"/>
</dbReference>
<dbReference type="PANTHER" id="PTHR21198">
    <property type="entry name" value="GLUTAMATE RACEMASE"/>
    <property type="match status" value="1"/>
</dbReference>
<dbReference type="PANTHER" id="PTHR21198:SF2">
    <property type="entry name" value="GLUTAMATE RACEMASE"/>
    <property type="match status" value="1"/>
</dbReference>
<dbReference type="Pfam" id="PF01177">
    <property type="entry name" value="Asp_Glu_race"/>
    <property type="match status" value="1"/>
</dbReference>
<dbReference type="SUPFAM" id="SSF53681">
    <property type="entry name" value="Aspartate/glutamate racemase"/>
    <property type="match status" value="2"/>
</dbReference>
<dbReference type="PROSITE" id="PS00923">
    <property type="entry name" value="ASP_GLU_RACEMASE_1"/>
    <property type="match status" value="1"/>
</dbReference>
<accession>Q87KP1</accession>